<dbReference type="EC" id="6.1.1.20" evidence="1"/>
<dbReference type="EMBL" id="CP000681">
    <property type="protein sequence ID" value="ABP75551.1"/>
    <property type="molecule type" value="Genomic_DNA"/>
</dbReference>
<dbReference type="SMR" id="A4Y6G8"/>
<dbReference type="STRING" id="319224.Sputcn32_1828"/>
<dbReference type="KEGG" id="spc:Sputcn32_1828"/>
<dbReference type="eggNOG" id="COG0016">
    <property type="taxonomic scope" value="Bacteria"/>
</dbReference>
<dbReference type="HOGENOM" id="CLU_025086_0_1_6"/>
<dbReference type="GO" id="GO:0005737">
    <property type="term" value="C:cytoplasm"/>
    <property type="evidence" value="ECO:0007669"/>
    <property type="project" value="UniProtKB-SubCell"/>
</dbReference>
<dbReference type="GO" id="GO:0005524">
    <property type="term" value="F:ATP binding"/>
    <property type="evidence" value="ECO:0007669"/>
    <property type="project" value="UniProtKB-UniRule"/>
</dbReference>
<dbReference type="GO" id="GO:0000287">
    <property type="term" value="F:magnesium ion binding"/>
    <property type="evidence" value="ECO:0007669"/>
    <property type="project" value="UniProtKB-UniRule"/>
</dbReference>
<dbReference type="GO" id="GO:0004826">
    <property type="term" value="F:phenylalanine-tRNA ligase activity"/>
    <property type="evidence" value="ECO:0007669"/>
    <property type="project" value="UniProtKB-UniRule"/>
</dbReference>
<dbReference type="GO" id="GO:0000049">
    <property type="term" value="F:tRNA binding"/>
    <property type="evidence" value="ECO:0007669"/>
    <property type="project" value="InterPro"/>
</dbReference>
<dbReference type="GO" id="GO:0006432">
    <property type="term" value="P:phenylalanyl-tRNA aminoacylation"/>
    <property type="evidence" value="ECO:0007669"/>
    <property type="project" value="UniProtKB-UniRule"/>
</dbReference>
<dbReference type="CDD" id="cd00496">
    <property type="entry name" value="PheRS_alpha_core"/>
    <property type="match status" value="1"/>
</dbReference>
<dbReference type="FunFam" id="3.30.930.10:FF:000003">
    <property type="entry name" value="Phenylalanine--tRNA ligase alpha subunit"/>
    <property type="match status" value="1"/>
</dbReference>
<dbReference type="Gene3D" id="3.30.930.10">
    <property type="entry name" value="Bira Bifunctional Protein, Domain 2"/>
    <property type="match status" value="1"/>
</dbReference>
<dbReference type="HAMAP" id="MF_00281">
    <property type="entry name" value="Phe_tRNA_synth_alpha1"/>
    <property type="match status" value="1"/>
</dbReference>
<dbReference type="InterPro" id="IPR006195">
    <property type="entry name" value="aa-tRNA-synth_II"/>
</dbReference>
<dbReference type="InterPro" id="IPR045864">
    <property type="entry name" value="aa-tRNA-synth_II/BPL/LPL"/>
</dbReference>
<dbReference type="InterPro" id="IPR004529">
    <property type="entry name" value="Phe-tRNA-synth_IIc_asu"/>
</dbReference>
<dbReference type="InterPro" id="IPR004188">
    <property type="entry name" value="Phe-tRNA_ligase_II_N"/>
</dbReference>
<dbReference type="InterPro" id="IPR022911">
    <property type="entry name" value="Phe_tRNA_ligase_alpha1_bac"/>
</dbReference>
<dbReference type="InterPro" id="IPR002319">
    <property type="entry name" value="Phenylalanyl-tRNA_Synthase"/>
</dbReference>
<dbReference type="InterPro" id="IPR010978">
    <property type="entry name" value="tRNA-bd_arm"/>
</dbReference>
<dbReference type="NCBIfam" id="TIGR00468">
    <property type="entry name" value="pheS"/>
    <property type="match status" value="1"/>
</dbReference>
<dbReference type="PANTHER" id="PTHR11538:SF41">
    <property type="entry name" value="PHENYLALANINE--TRNA LIGASE, MITOCHONDRIAL"/>
    <property type="match status" value="1"/>
</dbReference>
<dbReference type="PANTHER" id="PTHR11538">
    <property type="entry name" value="PHENYLALANYL-TRNA SYNTHETASE"/>
    <property type="match status" value="1"/>
</dbReference>
<dbReference type="Pfam" id="PF02912">
    <property type="entry name" value="Phe_tRNA-synt_N"/>
    <property type="match status" value="1"/>
</dbReference>
<dbReference type="Pfam" id="PF01409">
    <property type="entry name" value="tRNA-synt_2d"/>
    <property type="match status" value="1"/>
</dbReference>
<dbReference type="SUPFAM" id="SSF55681">
    <property type="entry name" value="Class II aaRS and biotin synthetases"/>
    <property type="match status" value="1"/>
</dbReference>
<dbReference type="SUPFAM" id="SSF46589">
    <property type="entry name" value="tRNA-binding arm"/>
    <property type="match status" value="1"/>
</dbReference>
<dbReference type="PROSITE" id="PS50862">
    <property type="entry name" value="AA_TRNA_LIGASE_II"/>
    <property type="match status" value="1"/>
</dbReference>
<comment type="catalytic activity">
    <reaction evidence="1">
        <text>tRNA(Phe) + L-phenylalanine + ATP = L-phenylalanyl-tRNA(Phe) + AMP + diphosphate + H(+)</text>
        <dbReference type="Rhea" id="RHEA:19413"/>
        <dbReference type="Rhea" id="RHEA-COMP:9668"/>
        <dbReference type="Rhea" id="RHEA-COMP:9699"/>
        <dbReference type="ChEBI" id="CHEBI:15378"/>
        <dbReference type="ChEBI" id="CHEBI:30616"/>
        <dbReference type="ChEBI" id="CHEBI:33019"/>
        <dbReference type="ChEBI" id="CHEBI:58095"/>
        <dbReference type="ChEBI" id="CHEBI:78442"/>
        <dbReference type="ChEBI" id="CHEBI:78531"/>
        <dbReference type="ChEBI" id="CHEBI:456215"/>
        <dbReference type="EC" id="6.1.1.20"/>
    </reaction>
</comment>
<comment type="cofactor">
    <cofactor evidence="1">
        <name>Mg(2+)</name>
        <dbReference type="ChEBI" id="CHEBI:18420"/>
    </cofactor>
    <text evidence="1">Binds 2 magnesium ions per tetramer.</text>
</comment>
<comment type="subunit">
    <text evidence="1">Tetramer of two alpha and two beta subunits.</text>
</comment>
<comment type="subcellular location">
    <subcellularLocation>
        <location evidence="1">Cytoplasm</location>
    </subcellularLocation>
</comment>
<comment type="similarity">
    <text evidence="1">Belongs to the class-II aminoacyl-tRNA synthetase family. Phe-tRNA synthetase alpha subunit type 1 subfamily.</text>
</comment>
<feature type="chain" id="PRO_1000006897" description="Phenylalanine--tRNA ligase alpha subunit">
    <location>
        <begin position="1"/>
        <end position="327"/>
    </location>
</feature>
<feature type="binding site" evidence="1">
    <location>
        <position position="252"/>
    </location>
    <ligand>
        <name>Mg(2+)</name>
        <dbReference type="ChEBI" id="CHEBI:18420"/>
        <note>shared with beta subunit</note>
    </ligand>
</feature>
<proteinExistence type="inferred from homology"/>
<protein>
    <recommendedName>
        <fullName evidence="1">Phenylalanine--tRNA ligase alpha subunit</fullName>
        <ecNumber evidence="1">6.1.1.20</ecNumber>
    </recommendedName>
    <alternativeName>
        <fullName evidence="1">Phenylalanyl-tRNA synthetase alpha subunit</fullName>
        <shortName evidence="1">PheRS</shortName>
    </alternativeName>
</protein>
<gene>
    <name evidence="1" type="primary">pheS</name>
    <name type="ordered locus">Sputcn32_1828</name>
</gene>
<reference key="1">
    <citation type="submission" date="2007-04" db="EMBL/GenBank/DDBJ databases">
        <title>Complete sequence of Shewanella putrefaciens CN-32.</title>
        <authorList>
            <consortium name="US DOE Joint Genome Institute"/>
            <person name="Copeland A."/>
            <person name="Lucas S."/>
            <person name="Lapidus A."/>
            <person name="Barry K."/>
            <person name="Detter J.C."/>
            <person name="Glavina del Rio T."/>
            <person name="Hammon N."/>
            <person name="Israni S."/>
            <person name="Dalin E."/>
            <person name="Tice H."/>
            <person name="Pitluck S."/>
            <person name="Chain P."/>
            <person name="Malfatti S."/>
            <person name="Shin M."/>
            <person name="Vergez L."/>
            <person name="Schmutz J."/>
            <person name="Larimer F."/>
            <person name="Land M."/>
            <person name="Hauser L."/>
            <person name="Kyrpides N."/>
            <person name="Mikhailova N."/>
            <person name="Romine M.F."/>
            <person name="Fredrickson J."/>
            <person name="Tiedje J."/>
            <person name="Richardson P."/>
        </authorList>
    </citation>
    <scope>NUCLEOTIDE SEQUENCE [LARGE SCALE GENOMIC DNA]</scope>
    <source>
        <strain>CN-32 / ATCC BAA-453</strain>
    </source>
</reference>
<organism>
    <name type="scientific">Shewanella putrefaciens (strain CN-32 / ATCC BAA-453)</name>
    <dbReference type="NCBI Taxonomy" id="319224"/>
    <lineage>
        <taxon>Bacteria</taxon>
        <taxon>Pseudomonadati</taxon>
        <taxon>Pseudomonadota</taxon>
        <taxon>Gammaproteobacteria</taxon>
        <taxon>Alteromonadales</taxon>
        <taxon>Shewanellaceae</taxon>
        <taxon>Shewanella</taxon>
    </lineage>
</organism>
<accession>A4Y6G8</accession>
<sequence>MQQLTEIVEQALVIIDQASDLKALDDIRVDYLGKKGKITDMMKMMGSLSPEEKPAFGQAVNDAKQAIQQKLTERIDGLKSSELEAKLIAEKIDVTLPGRTQENGGLHPVTRTIERIETFFGELGFSVKQGPEIEDDFHNFDALNISEHHPARADHDTFYFNPKLMLRTQTSGVQIRTMETEKPPLRIISPGRVYRNDYDQTHTPMFHQVEGLLVDEHVNFAELKGILHDFLRNFFEEDLQVRFRPSYFPFTEPSAEVDVMGKNGKWLEVLGCGMVHPNVLRSVGIDPEKYSGFAFGMGVERLTMLRYGVNDLRAFFENDLRFLKQFK</sequence>
<name>SYFA_SHEPC</name>
<keyword id="KW-0030">Aminoacyl-tRNA synthetase</keyword>
<keyword id="KW-0067">ATP-binding</keyword>
<keyword id="KW-0963">Cytoplasm</keyword>
<keyword id="KW-0436">Ligase</keyword>
<keyword id="KW-0460">Magnesium</keyword>
<keyword id="KW-0479">Metal-binding</keyword>
<keyword id="KW-0547">Nucleotide-binding</keyword>
<keyword id="KW-0648">Protein biosynthesis</keyword>
<evidence type="ECO:0000255" key="1">
    <source>
        <dbReference type="HAMAP-Rule" id="MF_00281"/>
    </source>
</evidence>